<comment type="similarity">
    <text evidence="1">Belongs to the UPF0339 family.</text>
</comment>
<sequence length="58" mass="6250">MAGKFEIYKDKSNKFRFRLKAGNGEVIAVGEAYESKAGCLSGIESVRKNAPDAAVVEV</sequence>
<gene>
    <name type="ordered locus">TDE_0826</name>
</gene>
<keyword id="KW-1185">Reference proteome</keyword>
<organism>
    <name type="scientific">Treponema denticola (strain ATCC 35405 / DSM 14222 / CIP 103919 / JCM 8153 / KCTC 15104)</name>
    <dbReference type="NCBI Taxonomy" id="243275"/>
    <lineage>
        <taxon>Bacteria</taxon>
        <taxon>Pseudomonadati</taxon>
        <taxon>Spirochaetota</taxon>
        <taxon>Spirochaetia</taxon>
        <taxon>Spirochaetales</taxon>
        <taxon>Treponemataceae</taxon>
        <taxon>Treponema</taxon>
    </lineage>
</organism>
<proteinExistence type="inferred from homology"/>
<name>Y826_TREDE</name>
<protein>
    <recommendedName>
        <fullName>UPF0339 protein TDE_0826</fullName>
    </recommendedName>
</protein>
<dbReference type="EMBL" id="AE017226">
    <property type="protein sequence ID" value="AAS11317.1"/>
    <property type="molecule type" value="Genomic_DNA"/>
</dbReference>
<dbReference type="RefSeq" id="NP_971436.1">
    <property type="nucleotide sequence ID" value="NC_002967.9"/>
</dbReference>
<dbReference type="RefSeq" id="WP_002672132.1">
    <property type="nucleotide sequence ID" value="NC_002967.9"/>
</dbReference>
<dbReference type="SMR" id="Q73PH3"/>
<dbReference type="STRING" id="243275.TDE_0826"/>
<dbReference type="PaxDb" id="243275-TDE_0826"/>
<dbReference type="GeneID" id="2739510"/>
<dbReference type="KEGG" id="tde:TDE_0826"/>
<dbReference type="PATRIC" id="fig|243275.7.peg.796"/>
<dbReference type="eggNOG" id="COG3422">
    <property type="taxonomic scope" value="Bacteria"/>
</dbReference>
<dbReference type="HOGENOM" id="CLU_163886_1_2_12"/>
<dbReference type="OrthoDB" id="9802792at2"/>
<dbReference type="Proteomes" id="UP000008212">
    <property type="component" value="Chromosome"/>
</dbReference>
<dbReference type="Gene3D" id="2.30.29.80">
    <property type="match status" value="1"/>
</dbReference>
<dbReference type="InterPro" id="IPR010879">
    <property type="entry name" value="DUF1508"/>
</dbReference>
<dbReference type="InterPro" id="IPR051141">
    <property type="entry name" value="UPF0339_domain"/>
</dbReference>
<dbReference type="InterPro" id="IPR036913">
    <property type="entry name" value="YegP-like_sf"/>
</dbReference>
<dbReference type="PANTHER" id="PTHR40606">
    <property type="match status" value="1"/>
</dbReference>
<dbReference type="PANTHER" id="PTHR40606:SF1">
    <property type="entry name" value="UPF0339 PROTEIN YEGP"/>
    <property type="match status" value="1"/>
</dbReference>
<dbReference type="Pfam" id="PF07411">
    <property type="entry name" value="DUF1508"/>
    <property type="match status" value="1"/>
</dbReference>
<dbReference type="SUPFAM" id="SSF160113">
    <property type="entry name" value="YegP-like"/>
    <property type="match status" value="1"/>
</dbReference>
<evidence type="ECO:0000305" key="1"/>
<reference key="1">
    <citation type="journal article" date="2004" name="Proc. Natl. Acad. Sci. U.S.A.">
        <title>Comparison of the genome of the oral pathogen Treponema denticola with other spirochete genomes.</title>
        <authorList>
            <person name="Seshadri R."/>
            <person name="Myers G.S.A."/>
            <person name="Tettelin H."/>
            <person name="Eisen J.A."/>
            <person name="Heidelberg J.F."/>
            <person name="Dodson R.J."/>
            <person name="Davidsen T.M."/>
            <person name="DeBoy R.T."/>
            <person name="Fouts D.E."/>
            <person name="Haft D.H."/>
            <person name="Selengut J."/>
            <person name="Ren Q."/>
            <person name="Brinkac L.M."/>
            <person name="Madupu R."/>
            <person name="Kolonay J.F."/>
            <person name="Durkin S.A."/>
            <person name="Daugherty S.C."/>
            <person name="Shetty J."/>
            <person name="Shvartsbeyn A."/>
            <person name="Gebregeorgis E."/>
            <person name="Geer K."/>
            <person name="Tsegaye G."/>
            <person name="Malek J.A."/>
            <person name="Ayodeji B."/>
            <person name="Shatsman S."/>
            <person name="McLeod M.P."/>
            <person name="Smajs D."/>
            <person name="Howell J.K."/>
            <person name="Pal S."/>
            <person name="Amin A."/>
            <person name="Vashisth P."/>
            <person name="McNeill T.Z."/>
            <person name="Xiang Q."/>
            <person name="Sodergren E."/>
            <person name="Baca E."/>
            <person name="Weinstock G.M."/>
            <person name="Norris S.J."/>
            <person name="Fraser C.M."/>
            <person name="Paulsen I.T."/>
        </authorList>
    </citation>
    <scope>NUCLEOTIDE SEQUENCE [LARGE SCALE GENOMIC DNA]</scope>
    <source>
        <strain>ATCC 35405 / DSM 14222 / CIP 103919 / JCM 8153 / KCTC 15104</strain>
    </source>
</reference>
<feature type="chain" id="PRO_0000218148" description="UPF0339 protein TDE_0826">
    <location>
        <begin position="1"/>
        <end position="58"/>
    </location>
</feature>
<accession>Q73PH3</accession>